<proteinExistence type="inferred from homology"/>
<keyword id="KW-0963">Cytoplasm</keyword>
<keyword id="KW-0489">Methyltransferase</keyword>
<keyword id="KW-0694">RNA-binding</keyword>
<keyword id="KW-0698">rRNA processing</keyword>
<keyword id="KW-0949">S-adenosyl-L-methionine</keyword>
<keyword id="KW-0808">Transferase</keyword>
<dbReference type="EC" id="2.1.1.182" evidence="1"/>
<dbReference type="EMBL" id="AM920689">
    <property type="protein sequence ID" value="CAP52925.1"/>
    <property type="molecule type" value="Genomic_DNA"/>
</dbReference>
<dbReference type="SMR" id="B0RUI3"/>
<dbReference type="KEGG" id="xca:xcc-b100_3560"/>
<dbReference type="HOGENOM" id="CLU_041220_0_1_6"/>
<dbReference type="Proteomes" id="UP000001188">
    <property type="component" value="Chromosome"/>
</dbReference>
<dbReference type="GO" id="GO:0005829">
    <property type="term" value="C:cytosol"/>
    <property type="evidence" value="ECO:0007669"/>
    <property type="project" value="TreeGrafter"/>
</dbReference>
<dbReference type="GO" id="GO:0052908">
    <property type="term" value="F:16S rRNA (adenine(1518)-N(6)/adenine(1519)-N(6))-dimethyltransferase activity"/>
    <property type="evidence" value="ECO:0007669"/>
    <property type="project" value="UniProtKB-EC"/>
</dbReference>
<dbReference type="GO" id="GO:0003723">
    <property type="term" value="F:RNA binding"/>
    <property type="evidence" value="ECO:0007669"/>
    <property type="project" value="UniProtKB-KW"/>
</dbReference>
<dbReference type="FunFam" id="1.10.8.100:FF:000001">
    <property type="entry name" value="Ribosomal RNA small subunit methyltransferase A"/>
    <property type="match status" value="1"/>
</dbReference>
<dbReference type="FunFam" id="3.40.50.150:FF:000222">
    <property type="entry name" value="Ribosomal RNA small subunit methyltransferase A"/>
    <property type="match status" value="1"/>
</dbReference>
<dbReference type="Gene3D" id="1.10.8.100">
    <property type="entry name" value="Ribosomal RNA adenine dimethylase-like, domain 2"/>
    <property type="match status" value="1"/>
</dbReference>
<dbReference type="Gene3D" id="3.40.50.150">
    <property type="entry name" value="Vaccinia Virus protein VP39"/>
    <property type="match status" value="1"/>
</dbReference>
<dbReference type="HAMAP" id="MF_00607">
    <property type="entry name" value="16SrRNA_methyltr_A"/>
    <property type="match status" value="1"/>
</dbReference>
<dbReference type="InterPro" id="IPR001737">
    <property type="entry name" value="KsgA/Erm"/>
</dbReference>
<dbReference type="InterPro" id="IPR023165">
    <property type="entry name" value="rRNA_Ade_diMease-like_C"/>
</dbReference>
<dbReference type="InterPro" id="IPR020596">
    <property type="entry name" value="rRNA_Ade_Mease_Trfase_CS"/>
</dbReference>
<dbReference type="InterPro" id="IPR020598">
    <property type="entry name" value="rRNA_Ade_methylase_Trfase_N"/>
</dbReference>
<dbReference type="InterPro" id="IPR011530">
    <property type="entry name" value="rRNA_adenine_dimethylase"/>
</dbReference>
<dbReference type="InterPro" id="IPR029063">
    <property type="entry name" value="SAM-dependent_MTases_sf"/>
</dbReference>
<dbReference type="NCBIfam" id="TIGR00755">
    <property type="entry name" value="ksgA"/>
    <property type="match status" value="1"/>
</dbReference>
<dbReference type="PANTHER" id="PTHR11727">
    <property type="entry name" value="DIMETHYLADENOSINE TRANSFERASE"/>
    <property type="match status" value="1"/>
</dbReference>
<dbReference type="PANTHER" id="PTHR11727:SF7">
    <property type="entry name" value="DIMETHYLADENOSINE TRANSFERASE-RELATED"/>
    <property type="match status" value="1"/>
</dbReference>
<dbReference type="Pfam" id="PF00398">
    <property type="entry name" value="RrnaAD"/>
    <property type="match status" value="1"/>
</dbReference>
<dbReference type="SMART" id="SM00650">
    <property type="entry name" value="rADc"/>
    <property type="match status" value="1"/>
</dbReference>
<dbReference type="SUPFAM" id="SSF53335">
    <property type="entry name" value="S-adenosyl-L-methionine-dependent methyltransferases"/>
    <property type="match status" value="1"/>
</dbReference>
<dbReference type="PROSITE" id="PS01131">
    <property type="entry name" value="RRNA_A_DIMETH"/>
    <property type="match status" value="1"/>
</dbReference>
<dbReference type="PROSITE" id="PS51689">
    <property type="entry name" value="SAM_RNA_A_N6_MT"/>
    <property type="match status" value="1"/>
</dbReference>
<gene>
    <name evidence="1" type="primary">rsmA</name>
    <name evidence="1" type="synonym">ksgA</name>
    <name type="ordered locus">xcc-b100_3560</name>
</gene>
<protein>
    <recommendedName>
        <fullName evidence="1">Ribosomal RNA small subunit methyltransferase A</fullName>
        <ecNumber evidence="1">2.1.1.182</ecNumber>
    </recommendedName>
    <alternativeName>
        <fullName evidence="1">16S rRNA (adenine(1518)-N(6)/adenine(1519)-N(6))-dimethyltransferase</fullName>
    </alternativeName>
    <alternativeName>
        <fullName evidence="1">16S rRNA dimethyladenosine transferase</fullName>
    </alternativeName>
    <alternativeName>
        <fullName evidence="1">16S rRNA dimethylase</fullName>
    </alternativeName>
    <alternativeName>
        <fullName evidence="1">S-adenosylmethionine-6-N', N'-adenosyl(rRNA) dimethyltransferase</fullName>
    </alternativeName>
</protein>
<sequence>MNSSFSAPAKKSLGQHFLADRYYIDRIVQAVDPRPGQHLVEIGPGQGAITFPLLRKHGALTVIEFDRDLIAPLTDAAAPIGQLQIIHRDVLAVDFTAVADGTPIRLVGNLPYNISSPILFHALDHASAVADMHFMLQKEVVDRMAAGPGSKVYGRLSVMLQAYCEVTALFVVPPGAFRPPPKVDSAVVRLVPRDAASVLIKDRKRFADVVRAGFGQRRKTLRNALSTVCEPAHFEAAGVRPDARAEQLEVADFIRLANVELA</sequence>
<feature type="chain" id="PRO_1000130337" description="Ribosomal RNA small subunit methyltransferase A">
    <location>
        <begin position="1"/>
        <end position="262"/>
    </location>
</feature>
<feature type="binding site" evidence="1">
    <location>
        <position position="16"/>
    </location>
    <ligand>
        <name>S-adenosyl-L-methionine</name>
        <dbReference type="ChEBI" id="CHEBI:59789"/>
    </ligand>
</feature>
<feature type="binding site" evidence="1">
    <location>
        <position position="18"/>
    </location>
    <ligand>
        <name>S-adenosyl-L-methionine</name>
        <dbReference type="ChEBI" id="CHEBI:59789"/>
    </ligand>
</feature>
<feature type="binding site" evidence="1">
    <location>
        <position position="43"/>
    </location>
    <ligand>
        <name>S-adenosyl-L-methionine</name>
        <dbReference type="ChEBI" id="CHEBI:59789"/>
    </ligand>
</feature>
<feature type="binding site" evidence="1">
    <location>
        <position position="64"/>
    </location>
    <ligand>
        <name>S-adenosyl-L-methionine</name>
        <dbReference type="ChEBI" id="CHEBI:59789"/>
    </ligand>
</feature>
<feature type="binding site" evidence="1">
    <location>
        <position position="89"/>
    </location>
    <ligand>
        <name>S-adenosyl-L-methionine</name>
        <dbReference type="ChEBI" id="CHEBI:59789"/>
    </ligand>
</feature>
<feature type="binding site" evidence="1">
    <location>
        <position position="109"/>
    </location>
    <ligand>
        <name>S-adenosyl-L-methionine</name>
        <dbReference type="ChEBI" id="CHEBI:59789"/>
    </ligand>
</feature>
<evidence type="ECO:0000255" key="1">
    <source>
        <dbReference type="HAMAP-Rule" id="MF_00607"/>
    </source>
</evidence>
<name>RSMA_XANCB</name>
<organism>
    <name type="scientific">Xanthomonas campestris pv. campestris (strain B100)</name>
    <dbReference type="NCBI Taxonomy" id="509169"/>
    <lineage>
        <taxon>Bacteria</taxon>
        <taxon>Pseudomonadati</taxon>
        <taxon>Pseudomonadota</taxon>
        <taxon>Gammaproteobacteria</taxon>
        <taxon>Lysobacterales</taxon>
        <taxon>Lysobacteraceae</taxon>
        <taxon>Xanthomonas</taxon>
    </lineage>
</organism>
<comment type="function">
    <text evidence="1">Specifically dimethylates two adjacent adenosines (A1518 and A1519) in the loop of a conserved hairpin near the 3'-end of 16S rRNA in the 30S particle. May play a critical role in biogenesis of 30S subunits.</text>
</comment>
<comment type="catalytic activity">
    <reaction evidence="1">
        <text>adenosine(1518)/adenosine(1519) in 16S rRNA + 4 S-adenosyl-L-methionine = N(6)-dimethyladenosine(1518)/N(6)-dimethyladenosine(1519) in 16S rRNA + 4 S-adenosyl-L-homocysteine + 4 H(+)</text>
        <dbReference type="Rhea" id="RHEA:19609"/>
        <dbReference type="Rhea" id="RHEA-COMP:10232"/>
        <dbReference type="Rhea" id="RHEA-COMP:10233"/>
        <dbReference type="ChEBI" id="CHEBI:15378"/>
        <dbReference type="ChEBI" id="CHEBI:57856"/>
        <dbReference type="ChEBI" id="CHEBI:59789"/>
        <dbReference type="ChEBI" id="CHEBI:74411"/>
        <dbReference type="ChEBI" id="CHEBI:74493"/>
        <dbReference type="EC" id="2.1.1.182"/>
    </reaction>
</comment>
<comment type="subcellular location">
    <subcellularLocation>
        <location evidence="1">Cytoplasm</location>
    </subcellularLocation>
</comment>
<comment type="similarity">
    <text evidence="1">Belongs to the class I-like SAM-binding methyltransferase superfamily. rRNA adenine N(6)-methyltransferase family. RsmA subfamily.</text>
</comment>
<accession>B0RUI3</accession>
<reference key="1">
    <citation type="journal article" date="2008" name="J. Biotechnol.">
        <title>The genome of Xanthomonas campestris pv. campestris B100 and its use for the reconstruction of metabolic pathways involved in xanthan biosynthesis.</title>
        <authorList>
            <person name="Vorhoelter F.-J."/>
            <person name="Schneiker S."/>
            <person name="Goesmann A."/>
            <person name="Krause L."/>
            <person name="Bekel T."/>
            <person name="Kaiser O."/>
            <person name="Linke B."/>
            <person name="Patschkowski T."/>
            <person name="Rueckert C."/>
            <person name="Schmid J."/>
            <person name="Sidhu V.K."/>
            <person name="Sieber V."/>
            <person name="Tauch A."/>
            <person name="Watt S.A."/>
            <person name="Weisshaar B."/>
            <person name="Becker A."/>
            <person name="Niehaus K."/>
            <person name="Puehler A."/>
        </authorList>
    </citation>
    <scope>NUCLEOTIDE SEQUENCE [LARGE SCALE GENOMIC DNA]</scope>
    <source>
        <strain>B100</strain>
    </source>
</reference>